<organism>
    <name type="scientific">Mus musculus</name>
    <name type="common">Mouse</name>
    <dbReference type="NCBI Taxonomy" id="10090"/>
    <lineage>
        <taxon>Eukaryota</taxon>
        <taxon>Metazoa</taxon>
        <taxon>Chordata</taxon>
        <taxon>Craniata</taxon>
        <taxon>Vertebrata</taxon>
        <taxon>Euteleostomi</taxon>
        <taxon>Mammalia</taxon>
        <taxon>Eutheria</taxon>
        <taxon>Euarchontoglires</taxon>
        <taxon>Glires</taxon>
        <taxon>Rodentia</taxon>
        <taxon>Myomorpha</taxon>
        <taxon>Muroidea</taxon>
        <taxon>Muridae</taxon>
        <taxon>Murinae</taxon>
        <taxon>Mus</taxon>
        <taxon>Mus</taxon>
    </lineage>
</organism>
<gene>
    <name type="primary">Map7d3</name>
    <name evidence="6" type="synonym">Mdp3</name>
    <name type="synonym">Mtap7d3</name>
</gene>
<protein>
    <recommendedName>
        <fullName>MAP7 domain-containing protein 3</fullName>
    </recommendedName>
</protein>
<evidence type="ECO:0000250" key="1">
    <source>
        <dbReference type="UniProtKB" id="Q8IWC1"/>
    </source>
</evidence>
<evidence type="ECO:0000255" key="2"/>
<evidence type="ECO:0000256" key="3">
    <source>
        <dbReference type="SAM" id="MobiDB-lite"/>
    </source>
</evidence>
<evidence type="ECO:0000269" key="4">
    <source>
    </source>
</evidence>
<evidence type="ECO:0000303" key="5">
    <source>
    </source>
</evidence>
<evidence type="ECO:0000303" key="6">
    <source>
    </source>
</evidence>
<evidence type="ECO:0000305" key="7"/>
<proteinExistence type="evidence at transcript level"/>
<accession>A2AEY4</accession>
<accession>Q0VF65</accession>
<accession>Q8C7V9</accession>
<accession>Q8C857</accession>
<accession>Q8CDD4</accession>
<feature type="chain" id="PRO_0000306813" description="MAP7 domain-containing protein 3">
    <location>
        <begin position="1"/>
        <end position="876"/>
    </location>
</feature>
<feature type="region of interest" description="Disordered" evidence="3">
    <location>
        <begin position="30"/>
        <end position="139"/>
    </location>
</feature>
<feature type="region of interest" description="Disordered" evidence="3">
    <location>
        <begin position="162"/>
        <end position="200"/>
    </location>
</feature>
<feature type="region of interest" description="Disordered" evidence="3">
    <location>
        <begin position="402"/>
        <end position="438"/>
    </location>
</feature>
<feature type="region of interest" description="Disordered" evidence="3">
    <location>
        <begin position="558"/>
        <end position="683"/>
    </location>
</feature>
<feature type="region of interest" description="Disordered" evidence="3">
    <location>
        <begin position="742"/>
        <end position="783"/>
    </location>
</feature>
<feature type="coiled-coil region" evidence="2">
    <location>
        <begin position="58"/>
        <end position="136"/>
    </location>
</feature>
<feature type="coiled-coil region" evidence="2">
    <location>
        <begin position="549"/>
        <end position="578"/>
    </location>
</feature>
<feature type="coiled-coil region" evidence="2">
    <location>
        <begin position="626"/>
        <end position="658"/>
    </location>
</feature>
<feature type="compositionally biased region" description="Polar residues" evidence="3">
    <location>
        <begin position="39"/>
        <end position="54"/>
    </location>
</feature>
<feature type="compositionally biased region" description="Basic and acidic residues" evidence="3">
    <location>
        <begin position="60"/>
        <end position="139"/>
    </location>
</feature>
<feature type="compositionally biased region" description="Basic and acidic residues" evidence="3">
    <location>
        <begin position="169"/>
        <end position="196"/>
    </location>
</feature>
<feature type="compositionally biased region" description="Basic and acidic residues" evidence="3">
    <location>
        <begin position="559"/>
        <end position="590"/>
    </location>
</feature>
<feature type="compositionally biased region" description="Basic and acidic residues" evidence="3">
    <location>
        <begin position="630"/>
        <end position="659"/>
    </location>
</feature>
<feature type="compositionally biased region" description="Acidic residues" evidence="3">
    <location>
        <begin position="665"/>
        <end position="679"/>
    </location>
</feature>
<feature type="compositionally biased region" description="Basic residues" evidence="3">
    <location>
        <begin position="750"/>
        <end position="763"/>
    </location>
</feature>
<feature type="compositionally biased region" description="Polar residues" evidence="3">
    <location>
        <begin position="771"/>
        <end position="782"/>
    </location>
</feature>
<feature type="modified residue" description="Phosphoserine" evidence="1">
    <location>
        <position position="417"/>
    </location>
</feature>
<feature type="modified residue" description="Phosphoserine" evidence="1">
    <location>
        <position position="483"/>
    </location>
</feature>
<feature type="splice variant" id="VSP_028500" description="In isoform 2." evidence="5">
    <location>
        <begin position="202"/>
        <end position="231"/>
    </location>
</feature>
<feature type="sequence conflict" description="In Ref. 2; BAC26846." evidence="7" ref="2">
    <original>S</original>
    <variation>C</variation>
    <location>
        <position position="217"/>
    </location>
</feature>
<keyword id="KW-0025">Alternative splicing</keyword>
<keyword id="KW-0175">Coiled coil</keyword>
<keyword id="KW-0963">Cytoplasm</keyword>
<keyword id="KW-0206">Cytoskeleton</keyword>
<keyword id="KW-0597">Phosphoprotein</keyword>
<keyword id="KW-1185">Reference proteome</keyword>
<comment type="function">
    <text evidence="1">Promotes the assembly and stability of microtubules.</text>
</comment>
<comment type="subcellular location">
    <subcellularLocation>
        <location evidence="1">Cytoplasm</location>
        <location evidence="1">Cytoskeleton</location>
        <location evidence="1">Spindle</location>
    </subcellularLocation>
    <text evidence="1">Localizes to the microtubules throughout mitosis.</text>
</comment>
<comment type="alternative products">
    <event type="alternative splicing"/>
    <isoform>
        <id>A2AEY4-1</id>
        <name>1</name>
        <sequence type="displayed"/>
    </isoform>
    <isoform>
        <id>A2AEY4-2</id>
        <name>2</name>
        <sequence type="described" ref="VSP_028500"/>
    </isoform>
</comment>
<comment type="tissue specificity">
    <text evidence="4">High expression in lung, skeletal muscle, brain, and kidney, with much weaker expression in spleen, small intestine, liver, and heart.</text>
</comment>
<comment type="similarity">
    <text evidence="7">Belongs to the MAP7 family.</text>
</comment>
<comment type="sequence caution" evidence="7">
    <conflict type="erroneous initiation">
        <sequence resource="EMBL-CDS" id="AAI18964"/>
    </conflict>
    <text>Truncated N-terminus.</text>
</comment>
<comment type="sequence caution" evidence="7">
    <conflict type="erroneous initiation">
        <sequence resource="EMBL-CDS" id="BAC26846"/>
    </conflict>
    <text>Truncated N-terminus.</text>
</comment>
<comment type="sequence caution" evidence="7">
    <conflict type="erroneous initiation">
        <sequence resource="EMBL-CDS" id="BAC33317"/>
    </conflict>
    <text>Truncated N-terminus.</text>
</comment>
<comment type="sequence caution" evidence="7">
    <conflict type="erroneous gene model prediction">
        <sequence resource="EMBL-CDS" id="CAM26746"/>
    </conflict>
</comment>
<reference key="1">
    <citation type="journal article" date="2009" name="PLoS Biol.">
        <title>Lineage-specific biology revealed by a finished genome assembly of the mouse.</title>
        <authorList>
            <person name="Church D.M."/>
            <person name="Goodstadt L."/>
            <person name="Hillier L.W."/>
            <person name="Zody M.C."/>
            <person name="Goldstein S."/>
            <person name="She X."/>
            <person name="Bult C.J."/>
            <person name="Agarwala R."/>
            <person name="Cherry J.L."/>
            <person name="DiCuccio M."/>
            <person name="Hlavina W."/>
            <person name="Kapustin Y."/>
            <person name="Meric P."/>
            <person name="Maglott D."/>
            <person name="Birtle Z."/>
            <person name="Marques A.C."/>
            <person name="Graves T."/>
            <person name="Zhou S."/>
            <person name="Teague B."/>
            <person name="Potamousis K."/>
            <person name="Churas C."/>
            <person name="Place M."/>
            <person name="Herschleb J."/>
            <person name="Runnheim R."/>
            <person name="Forrest D."/>
            <person name="Amos-Landgraf J."/>
            <person name="Schwartz D.C."/>
            <person name="Cheng Z."/>
            <person name="Lindblad-Toh K."/>
            <person name="Eichler E.E."/>
            <person name="Ponting C.P."/>
        </authorList>
    </citation>
    <scope>NUCLEOTIDE SEQUENCE [LARGE SCALE GENOMIC DNA]</scope>
    <source>
        <strain>C57BL/6J</strain>
    </source>
</reference>
<reference key="2">
    <citation type="journal article" date="2005" name="Science">
        <title>The transcriptional landscape of the mammalian genome.</title>
        <authorList>
            <person name="Carninci P."/>
            <person name="Kasukawa T."/>
            <person name="Katayama S."/>
            <person name="Gough J."/>
            <person name="Frith M.C."/>
            <person name="Maeda N."/>
            <person name="Oyama R."/>
            <person name="Ravasi T."/>
            <person name="Lenhard B."/>
            <person name="Wells C."/>
            <person name="Kodzius R."/>
            <person name="Shimokawa K."/>
            <person name="Bajic V.B."/>
            <person name="Brenner S.E."/>
            <person name="Batalov S."/>
            <person name="Forrest A.R."/>
            <person name="Zavolan M."/>
            <person name="Davis M.J."/>
            <person name="Wilming L.G."/>
            <person name="Aidinis V."/>
            <person name="Allen J.E."/>
            <person name="Ambesi-Impiombato A."/>
            <person name="Apweiler R."/>
            <person name="Aturaliya R.N."/>
            <person name="Bailey T.L."/>
            <person name="Bansal M."/>
            <person name="Baxter L."/>
            <person name="Beisel K.W."/>
            <person name="Bersano T."/>
            <person name="Bono H."/>
            <person name="Chalk A.M."/>
            <person name="Chiu K.P."/>
            <person name="Choudhary V."/>
            <person name="Christoffels A."/>
            <person name="Clutterbuck D.R."/>
            <person name="Crowe M.L."/>
            <person name="Dalla E."/>
            <person name="Dalrymple B.P."/>
            <person name="de Bono B."/>
            <person name="Della Gatta G."/>
            <person name="di Bernardo D."/>
            <person name="Down T."/>
            <person name="Engstrom P."/>
            <person name="Fagiolini M."/>
            <person name="Faulkner G."/>
            <person name="Fletcher C.F."/>
            <person name="Fukushima T."/>
            <person name="Furuno M."/>
            <person name="Futaki S."/>
            <person name="Gariboldi M."/>
            <person name="Georgii-Hemming P."/>
            <person name="Gingeras T.R."/>
            <person name="Gojobori T."/>
            <person name="Green R.E."/>
            <person name="Gustincich S."/>
            <person name="Harbers M."/>
            <person name="Hayashi Y."/>
            <person name="Hensch T.K."/>
            <person name="Hirokawa N."/>
            <person name="Hill D."/>
            <person name="Huminiecki L."/>
            <person name="Iacono M."/>
            <person name="Ikeo K."/>
            <person name="Iwama A."/>
            <person name="Ishikawa T."/>
            <person name="Jakt M."/>
            <person name="Kanapin A."/>
            <person name="Katoh M."/>
            <person name="Kawasawa Y."/>
            <person name="Kelso J."/>
            <person name="Kitamura H."/>
            <person name="Kitano H."/>
            <person name="Kollias G."/>
            <person name="Krishnan S.P."/>
            <person name="Kruger A."/>
            <person name="Kummerfeld S.K."/>
            <person name="Kurochkin I.V."/>
            <person name="Lareau L.F."/>
            <person name="Lazarevic D."/>
            <person name="Lipovich L."/>
            <person name="Liu J."/>
            <person name="Liuni S."/>
            <person name="McWilliam S."/>
            <person name="Madan Babu M."/>
            <person name="Madera M."/>
            <person name="Marchionni L."/>
            <person name="Matsuda H."/>
            <person name="Matsuzawa S."/>
            <person name="Miki H."/>
            <person name="Mignone F."/>
            <person name="Miyake S."/>
            <person name="Morris K."/>
            <person name="Mottagui-Tabar S."/>
            <person name="Mulder N."/>
            <person name="Nakano N."/>
            <person name="Nakauchi H."/>
            <person name="Ng P."/>
            <person name="Nilsson R."/>
            <person name="Nishiguchi S."/>
            <person name="Nishikawa S."/>
            <person name="Nori F."/>
            <person name="Ohara O."/>
            <person name="Okazaki Y."/>
            <person name="Orlando V."/>
            <person name="Pang K.C."/>
            <person name="Pavan W.J."/>
            <person name="Pavesi G."/>
            <person name="Pesole G."/>
            <person name="Petrovsky N."/>
            <person name="Piazza S."/>
            <person name="Reed J."/>
            <person name="Reid J.F."/>
            <person name="Ring B.Z."/>
            <person name="Ringwald M."/>
            <person name="Rost B."/>
            <person name="Ruan Y."/>
            <person name="Salzberg S.L."/>
            <person name="Sandelin A."/>
            <person name="Schneider C."/>
            <person name="Schoenbach C."/>
            <person name="Sekiguchi K."/>
            <person name="Semple C.A."/>
            <person name="Seno S."/>
            <person name="Sessa L."/>
            <person name="Sheng Y."/>
            <person name="Shibata Y."/>
            <person name="Shimada H."/>
            <person name="Shimada K."/>
            <person name="Silva D."/>
            <person name="Sinclair B."/>
            <person name="Sperling S."/>
            <person name="Stupka E."/>
            <person name="Sugiura K."/>
            <person name="Sultana R."/>
            <person name="Takenaka Y."/>
            <person name="Taki K."/>
            <person name="Tammoja K."/>
            <person name="Tan S.L."/>
            <person name="Tang S."/>
            <person name="Taylor M.S."/>
            <person name="Tegner J."/>
            <person name="Teichmann S.A."/>
            <person name="Ueda H.R."/>
            <person name="van Nimwegen E."/>
            <person name="Verardo R."/>
            <person name="Wei C.L."/>
            <person name="Yagi K."/>
            <person name="Yamanishi H."/>
            <person name="Zabarovsky E."/>
            <person name="Zhu S."/>
            <person name="Zimmer A."/>
            <person name="Hide W."/>
            <person name="Bult C."/>
            <person name="Grimmond S.M."/>
            <person name="Teasdale R.D."/>
            <person name="Liu E.T."/>
            <person name="Brusic V."/>
            <person name="Quackenbush J."/>
            <person name="Wahlestedt C."/>
            <person name="Mattick J.S."/>
            <person name="Hume D.A."/>
            <person name="Kai C."/>
            <person name="Sasaki D."/>
            <person name="Tomaru Y."/>
            <person name="Fukuda S."/>
            <person name="Kanamori-Katayama M."/>
            <person name="Suzuki M."/>
            <person name="Aoki J."/>
            <person name="Arakawa T."/>
            <person name="Iida J."/>
            <person name="Imamura K."/>
            <person name="Itoh M."/>
            <person name="Kato T."/>
            <person name="Kawaji H."/>
            <person name="Kawagashira N."/>
            <person name="Kawashima T."/>
            <person name="Kojima M."/>
            <person name="Kondo S."/>
            <person name="Konno H."/>
            <person name="Nakano K."/>
            <person name="Ninomiya N."/>
            <person name="Nishio T."/>
            <person name="Okada M."/>
            <person name="Plessy C."/>
            <person name="Shibata K."/>
            <person name="Shiraki T."/>
            <person name="Suzuki S."/>
            <person name="Tagami M."/>
            <person name="Waki K."/>
            <person name="Watahiki A."/>
            <person name="Okamura-Oho Y."/>
            <person name="Suzuki H."/>
            <person name="Kawai J."/>
            <person name="Hayashizaki Y."/>
        </authorList>
    </citation>
    <scope>NUCLEOTIDE SEQUENCE [LARGE SCALE MRNA] OF 1-519 (ISOFORM 2)</scope>
    <scope>NUCLEOTIDE SEQUENCE [LARGE SCALE MRNA] OF 22-876 (ISOFORM 1)</scope>
    <source>
        <strain>C57BL/6J</strain>
        <tissue>Embryonic head</tissue>
        <tissue>Embryonic stem cell</tissue>
        <tissue>Testis</tissue>
    </source>
</reference>
<reference key="3">
    <citation type="journal article" date="2004" name="Genome Res.">
        <title>The status, quality, and expansion of the NIH full-length cDNA project: the Mammalian Gene Collection (MGC).</title>
        <authorList>
            <consortium name="The MGC Project Team"/>
        </authorList>
    </citation>
    <scope>NUCLEOTIDE SEQUENCE [LARGE SCALE MRNA] OF 22-876</scope>
</reference>
<reference key="4">
    <citation type="journal article" date="2011" name="Cell Cycle">
        <title>Mdp3 is a novel microtubule-binding protein that regulates microtubule assembly and stability.</title>
        <authorList>
            <person name="Sun X."/>
            <person name="Shi X."/>
            <person name="Liu M."/>
            <person name="Li D."/>
            <person name="Zhang L."/>
            <person name="Liu X."/>
            <person name="Zhou J."/>
        </authorList>
    </citation>
    <scope>TISSUE SPECIFICITY</scope>
</reference>
<dbReference type="EMBL" id="AL671998">
    <property type="protein sequence ID" value="CAM26745.1"/>
    <property type="molecule type" value="Genomic_DNA"/>
</dbReference>
<dbReference type="EMBL" id="AL671998">
    <property type="protein sequence ID" value="CAM26746.1"/>
    <property type="status" value="ALT_SEQ"/>
    <property type="molecule type" value="Genomic_DNA"/>
</dbReference>
<dbReference type="EMBL" id="AK030211">
    <property type="protein sequence ID" value="BAC26846.1"/>
    <property type="status" value="ALT_INIT"/>
    <property type="molecule type" value="mRNA"/>
</dbReference>
<dbReference type="EMBL" id="AK048385">
    <property type="protein sequence ID" value="BAC33317.1"/>
    <property type="status" value="ALT_INIT"/>
    <property type="molecule type" value="mRNA"/>
</dbReference>
<dbReference type="EMBL" id="AK049164">
    <property type="protein sequence ID" value="BAC33580.1"/>
    <property type="molecule type" value="mRNA"/>
</dbReference>
<dbReference type="EMBL" id="BC118963">
    <property type="protein sequence ID" value="AAI18964.1"/>
    <property type="status" value="ALT_INIT"/>
    <property type="molecule type" value="mRNA"/>
</dbReference>
<dbReference type="CCDS" id="CCDS40982.1">
    <molecule id="A2AEY4-1"/>
</dbReference>
<dbReference type="RefSeq" id="NP_796267.2">
    <molecule id="A2AEY4-1"/>
    <property type="nucleotide sequence ID" value="NM_177293.3"/>
</dbReference>
<dbReference type="SMR" id="A2AEY4"/>
<dbReference type="BioGRID" id="236396">
    <property type="interactions" value="1"/>
</dbReference>
<dbReference type="FunCoup" id="A2AEY4">
    <property type="interactions" value="47"/>
</dbReference>
<dbReference type="STRING" id="10090.ENSMUSP00000110414"/>
<dbReference type="iPTMnet" id="A2AEY4"/>
<dbReference type="PhosphoSitePlus" id="A2AEY4"/>
<dbReference type="PaxDb" id="10090-ENSMUSP00000110414"/>
<dbReference type="PeptideAtlas" id="A2AEY4"/>
<dbReference type="ProteomicsDB" id="287290">
    <molecule id="A2AEY4-1"/>
</dbReference>
<dbReference type="ProteomicsDB" id="287291">
    <molecule id="A2AEY4-2"/>
</dbReference>
<dbReference type="Antibodypedia" id="51701">
    <property type="antibodies" value="15 antibodies from 9 providers"/>
</dbReference>
<dbReference type="DNASU" id="320923"/>
<dbReference type="Ensembl" id="ENSMUST00000114766.8">
    <molecule id="A2AEY4-1"/>
    <property type="protein sequence ID" value="ENSMUSP00000110414.2"/>
    <property type="gene ID" value="ENSMUSG00000067878.14"/>
</dbReference>
<dbReference type="GeneID" id="320923"/>
<dbReference type="KEGG" id="mmu:320923"/>
<dbReference type="UCSC" id="uc009tgp.1">
    <molecule id="A2AEY4-1"/>
    <property type="organism name" value="mouse"/>
</dbReference>
<dbReference type="UCSC" id="uc009tgq.1">
    <molecule id="A2AEY4-2"/>
    <property type="organism name" value="mouse"/>
</dbReference>
<dbReference type="AGR" id="MGI:2445051"/>
<dbReference type="CTD" id="79649"/>
<dbReference type="MGI" id="MGI:2445051">
    <property type="gene designation" value="Map7d3"/>
</dbReference>
<dbReference type="VEuPathDB" id="HostDB:ENSMUSG00000067878"/>
<dbReference type="eggNOG" id="ENOG502SDH7">
    <property type="taxonomic scope" value="Eukaryota"/>
</dbReference>
<dbReference type="GeneTree" id="ENSGT00950000182941"/>
<dbReference type="HOGENOM" id="CLU_016292_0_0_1"/>
<dbReference type="InParanoid" id="A2AEY4"/>
<dbReference type="OMA" id="CDMKTFR"/>
<dbReference type="OrthoDB" id="9950536at2759"/>
<dbReference type="PhylomeDB" id="A2AEY4"/>
<dbReference type="TreeFam" id="TF332273"/>
<dbReference type="BioGRID-ORCS" id="320923">
    <property type="hits" value="3 hits in 76 CRISPR screens"/>
</dbReference>
<dbReference type="PRO" id="PR:A2AEY4"/>
<dbReference type="Proteomes" id="UP000000589">
    <property type="component" value="Chromosome X"/>
</dbReference>
<dbReference type="RNAct" id="A2AEY4">
    <property type="molecule type" value="protein"/>
</dbReference>
<dbReference type="Bgee" id="ENSMUSG00000067878">
    <property type="expression patterns" value="Expressed in epiblast (generic) and 42 other cell types or tissues"/>
</dbReference>
<dbReference type="ExpressionAtlas" id="A2AEY4">
    <property type="expression patterns" value="baseline and differential"/>
</dbReference>
<dbReference type="GO" id="GO:0005737">
    <property type="term" value="C:cytoplasm"/>
    <property type="evidence" value="ECO:0007669"/>
    <property type="project" value="UniProtKB-KW"/>
</dbReference>
<dbReference type="GO" id="GO:0005819">
    <property type="term" value="C:spindle"/>
    <property type="evidence" value="ECO:0007669"/>
    <property type="project" value="UniProtKB-SubCell"/>
</dbReference>
<dbReference type="GO" id="GO:0008017">
    <property type="term" value="F:microtubule binding"/>
    <property type="evidence" value="ECO:0000250"/>
    <property type="project" value="UniProtKB"/>
</dbReference>
<dbReference type="GO" id="GO:0015631">
    <property type="term" value="F:tubulin binding"/>
    <property type="evidence" value="ECO:0000250"/>
    <property type="project" value="UniProtKB"/>
</dbReference>
<dbReference type="GO" id="GO:0000226">
    <property type="term" value="P:microtubule cytoskeleton organization"/>
    <property type="evidence" value="ECO:0000250"/>
    <property type="project" value="UniProtKB"/>
</dbReference>
<dbReference type="GO" id="GO:0046785">
    <property type="term" value="P:microtubule polymerization"/>
    <property type="evidence" value="ECO:0000250"/>
    <property type="project" value="UniProtKB"/>
</dbReference>
<dbReference type="InterPro" id="IPR051483">
    <property type="entry name" value="MAP7_domain-containing"/>
</dbReference>
<dbReference type="PANTHER" id="PTHR15073:SF5">
    <property type="entry name" value="MAP7 DOMAIN-CONTAINING PROTEIN 3"/>
    <property type="match status" value="1"/>
</dbReference>
<dbReference type="PANTHER" id="PTHR15073">
    <property type="entry name" value="MICROTUBULE-ASSOCIATED PROTEIN"/>
    <property type="match status" value="1"/>
</dbReference>
<sequence length="876" mass="98230">MADPTFAATSSSTSFRGLHERLVAMTQELAEERRHKRGINSSAGANKRSSSTPDGSVLKNDVKQQLAKERREQQKRQQEANKEKQLLEKEQKAKLQYEKQLEEKHRKLKEQKEKDQRRQASAEEKRKQKQAEDTEKFKAVVSRTLERCNRIDQRQKRWSWEGGVMNADKSGKLENKRSSSLSRKDNRLHPRGDMQHVDNTPGMTKYVFRYVTAPVFSSDEIKSSAMFCKPSAKTPVAAKLEKITTKKLDASLRGHVEGLSMMNIEIPPKITIEVPSPPKLEESSEADAEVRLQTMDDISKVKEDASQKVDIKVPTDENIARHPKPNVEELSPVSVDTSSSVELSSIVSVNSSPSLSTGSFSFGSVEISPVVSIDASLETNIDTSPELSMDSGNTKVASEIKTEAPLQARGESRLEASVEGQPEANVEGSPKNPEIDKRNINLTTKKQPLCHIPCYRWPSSSALGCRPPSPLKALQTRKIRPPSPIPVSSKLSTKTSLSYKITPVQNVLYVPNSLGVIATKKETIQKYPIKKEFGNRSMPSAEAIKKAFIQIRHAAYEQSKNEKERLQKEETKQRIARKPEIMAEKLDKVPAEGSLPCQDEQQDKNPTKTFLESPEVQKAELQKGDSAMMKSRDSAEQRKKEQENILQHWQERLERRKASEISFSSEDEADDEGESEDSLEIFPSGGKMLSMKLKKFHKYAKTKPQKLVFLQSGTDEVDTNKNVYFNGDMKAVKQKDPKYSMIQGKGSKLSAKKPPTRPIRSRKTKEGSTAIRPTQSASSNPNHKWVCDKVIDFNQTPFLKTTLTKSNKESPADSKIACQGPQAHLDHRKRTKSVSVPLTNVLSHLHITGRASNLEHPFASVYSRLAFGKEAEESDV</sequence>
<name>MA7D3_MOUSE</name>